<comment type="function">
    <text>Involved in chromosome cohesion during cell cycle and in DNA repair. Central component of cohesin complex. The cohesin complex is required for the cohesion of sister chromatids after DNA replication. The cohesin complex apparently forms a large proteinaceous ring within which sister chromatids can be trapped. At anaphase, the complex is cleaved and dissociates from chromatin, allowing sister chromatids to segregate. The cohesin complex may also play a role in spindle pole assembly during mitosis. Involved in DNA repair via its interaction with BRCA1 and its related phosphorylation by ATM, or via its phosphorylation by ATR. Works as a downstream effector both in the ATM/NBS1 branch and in the ATR/MSH2 branch of S-phase checkpoint.</text>
</comment>
<comment type="subunit">
    <text evidence="2 3 4 7">Forms a heterodimer with SMC3 in cohesin complexes. Cohesin complexes are composed of the SMC1 (SMC1A or meiosis-specific SMC1B) and SMC3 heterodimer attached via their SMC hinge domain, RAD21 which link them, and one STAG protein (STAG1, STAG2 or meiosis-specific STAG3), which interacts with RAD21. In germ cell cohesin complexes, SMC1A is mutually exclusive with SMC1B. Found in a complex with CDCA5, SMC3 and RAD21, PDS5A/SCC-112 and PDS5B/APRIN. Interacts with STAG3, NDC80, BRAC1, BRAT1 and RPGR. Found in a complex containing POLE and SMC3. The cohesin complex interacts with the cohesin loading complex subunits NIPBL/Scc2 (via HEAT repeats) and MAU2/Scc4. NIPBL directly contacts all members of the complex, RAD21, SMC1A/B, SMC3 and STAG1 (By similarity). Interacts with SYCP2 (PubMed:10652260).</text>
</comment>
<comment type="subcellular location">
    <subcellularLocation>
        <location evidence="1">Nucleus</location>
    </subcellularLocation>
    <subcellularLocation>
        <location evidence="1">Chromosome</location>
    </subcellularLocation>
    <text evidence="1">Associates with chromatin. Before prophase it is scattered along chromosome arms. During prophase, most of cohesin complexes dissociate from chromatin probably because of phosphorylation by PLK, except at centromeres, where cohesin complexes remain. At anaphase, the RAD21 subunit of the cohesin complex is cleaved, leading to the dissociation of the complex from chromosomes, allowing chromosome separation. In germ cells, cohesin complex dissociates from chromatin at prophase I, and may be replaced by a meiosis-specific cohesin complex. The phosphorylated form on Ser-957 and Ser-966 associates with chromatin during G1/S/G2 phases but not during M phase, suggesting that phosphorylation does not regulate cohesin function (By similarity).</text>
</comment>
<comment type="domain">
    <text evidence="1">The flexible SMC hinge domain, which separates the large intramolecular coiled coil regions, allows the heterotypic interaction with the corresponding domain of SMC3, forming a V-shaped heterodimer. The two heads of the heterodimer are then connected by different ends of the cleavable RAD21 protein, forming a ring structure (By similarity).</text>
</comment>
<comment type="PTM">
    <text evidence="3">Phosphorylated upon ionizing radiation or DNA methylation. Phosphorylation of Ser-957 and Ser-966 activates it and is required for S-phase checkpoint activation (By similarity).</text>
</comment>
<comment type="PTM">
    <text evidence="3">Ubiquitinated by the DCX(DCAF15) complex, leading to its degradation.</text>
</comment>
<comment type="similarity">
    <text evidence="8">Belongs to the SMC family. SMC1 subfamily.</text>
</comment>
<dbReference type="EMBL" id="AJ005113">
    <property type="protein sequence ID" value="CAA06377.1"/>
    <property type="molecule type" value="mRNA"/>
</dbReference>
<dbReference type="RefSeq" id="NP_113871.1">
    <property type="nucleotide sequence ID" value="NM_031683.1"/>
</dbReference>
<dbReference type="SMR" id="Q9Z1M9"/>
<dbReference type="BioGRID" id="248928">
    <property type="interactions" value="1"/>
</dbReference>
<dbReference type="FunCoup" id="Q9Z1M9">
    <property type="interactions" value="3646"/>
</dbReference>
<dbReference type="IntAct" id="Q9Z1M9">
    <property type="interactions" value="5"/>
</dbReference>
<dbReference type="STRING" id="10116.ENSRNOP00000004364"/>
<dbReference type="CarbonylDB" id="Q9Z1M9"/>
<dbReference type="iPTMnet" id="Q9Z1M9"/>
<dbReference type="PhosphoSitePlus" id="Q9Z1M9"/>
<dbReference type="jPOST" id="Q9Z1M9"/>
<dbReference type="PaxDb" id="10116-ENSRNOP00000004364"/>
<dbReference type="GeneID" id="63996"/>
<dbReference type="KEGG" id="rno:63996"/>
<dbReference type="AGR" id="RGD:61991"/>
<dbReference type="CTD" id="8243"/>
<dbReference type="RGD" id="61991">
    <property type="gene designation" value="Smc1a"/>
</dbReference>
<dbReference type="eggNOG" id="KOG0018">
    <property type="taxonomic scope" value="Eukaryota"/>
</dbReference>
<dbReference type="InParanoid" id="Q9Z1M9"/>
<dbReference type="PhylomeDB" id="Q9Z1M9"/>
<dbReference type="Reactome" id="R-RNO-2467813">
    <property type="pathway name" value="Separation of Sister Chromatids"/>
</dbReference>
<dbReference type="Reactome" id="R-RNO-2468052">
    <property type="pathway name" value="Establishment of Sister Chromatid Cohesion"/>
</dbReference>
<dbReference type="Reactome" id="R-RNO-2470946">
    <property type="pathway name" value="Cohesin Loading onto Chromatin"/>
</dbReference>
<dbReference type="Reactome" id="R-RNO-2500257">
    <property type="pathway name" value="Resolution of Sister Chromatid Cohesion"/>
</dbReference>
<dbReference type="Reactome" id="R-RNO-3108214">
    <property type="pathway name" value="SUMOylation of DNA damage response and repair proteins"/>
</dbReference>
<dbReference type="PRO" id="PR:Q9Z1M9"/>
<dbReference type="Proteomes" id="UP000002494">
    <property type="component" value="Unplaced"/>
</dbReference>
<dbReference type="GO" id="GO:0008278">
    <property type="term" value="C:cohesin complex"/>
    <property type="evidence" value="ECO:0000266"/>
    <property type="project" value="RGD"/>
</dbReference>
<dbReference type="GO" id="GO:0000776">
    <property type="term" value="C:kinetochore"/>
    <property type="evidence" value="ECO:0000250"/>
    <property type="project" value="UniProtKB"/>
</dbReference>
<dbReference type="GO" id="GO:0000800">
    <property type="term" value="C:lateral element"/>
    <property type="evidence" value="ECO:0000314"/>
    <property type="project" value="RGD"/>
</dbReference>
<dbReference type="GO" id="GO:0030893">
    <property type="term" value="C:meiotic cohesin complex"/>
    <property type="evidence" value="ECO:0000250"/>
    <property type="project" value="UniProtKB"/>
</dbReference>
<dbReference type="GO" id="GO:0030892">
    <property type="term" value="C:mitotic cohesin complex"/>
    <property type="evidence" value="ECO:0000266"/>
    <property type="project" value="RGD"/>
</dbReference>
<dbReference type="GO" id="GO:0097431">
    <property type="term" value="C:mitotic spindle pole"/>
    <property type="evidence" value="ECO:0000266"/>
    <property type="project" value="RGD"/>
</dbReference>
<dbReference type="GO" id="GO:0016363">
    <property type="term" value="C:nuclear matrix"/>
    <property type="evidence" value="ECO:0000266"/>
    <property type="project" value="RGD"/>
</dbReference>
<dbReference type="GO" id="GO:0005654">
    <property type="term" value="C:nucleoplasm"/>
    <property type="evidence" value="ECO:0000314"/>
    <property type="project" value="RGD"/>
</dbReference>
<dbReference type="GO" id="GO:0005634">
    <property type="term" value="C:nucleus"/>
    <property type="evidence" value="ECO:0000250"/>
    <property type="project" value="UniProtKB"/>
</dbReference>
<dbReference type="GO" id="GO:0000795">
    <property type="term" value="C:synaptonemal complex"/>
    <property type="evidence" value="ECO:0000314"/>
    <property type="project" value="RGD"/>
</dbReference>
<dbReference type="GO" id="GO:0005524">
    <property type="term" value="F:ATP binding"/>
    <property type="evidence" value="ECO:0007669"/>
    <property type="project" value="UniProtKB-KW"/>
</dbReference>
<dbReference type="GO" id="GO:0016887">
    <property type="term" value="F:ATP hydrolysis activity"/>
    <property type="evidence" value="ECO:0007669"/>
    <property type="project" value="InterPro"/>
</dbReference>
<dbReference type="GO" id="GO:0003682">
    <property type="term" value="F:chromatin binding"/>
    <property type="evidence" value="ECO:0000250"/>
    <property type="project" value="UniProtKB"/>
</dbReference>
<dbReference type="GO" id="GO:0003677">
    <property type="term" value="F:DNA binding"/>
    <property type="evidence" value="ECO:0000318"/>
    <property type="project" value="GO_Central"/>
</dbReference>
<dbReference type="GO" id="GO:0036033">
    <property type="term" value="F:mediator complex binding"/>
    <property type="evidence" value="ECO:0000266"/>
    <property type="project" value="RGD"/>
</dbReference>
<dbReference type="GO" id="GO:0046982">
    <property type="term" value="F:protein heterodimerization activity"/>
    <property type="evidence" value="ECO:0000266"/>
    <property type="project" value="RGD"/>
</dbReference>
<dbReference type="GO" id="GO:0051301">
    <property type="term" value="P:cell division"/>
    <property type="evidence" value="ECO:0007669"/>
    <property type="project" value="UniProtKB-KW"/>
</dbReference>
<dbReference type="GO" id="GO:0006281">
    <property type="term" value="P:DNA repair"/>
    <property type="evidence" value="ECO:0007669"/>
    <property type="project" value="UniProtKB-KW"/>
</dbReference>
<dbReference type="GO" id="GO:0051321">
    <property type="term" value="P:meiotic cell cycle"/>
    <property type="evidence" value="ECO:0000314"/>
    <property type="project" value="UniProtKB"/>
</dbReference>
<dbReference type="GO" id="GO:0090307">
    <property type="term" value="P:mitotic spindle assembly"/>
    <property type="evidence" value="ECO:0000266"/>
    <property type="project" value="RGD"/>
</dbReference>
<dbReference type="GO" id="GO:0072423">
    <property type="term" value="P:response to DNA damage checkpoint signaling"/>
    <property type="evidence" value="ECO:0000250"/>
    <property type="project" value="UniProtKB"/>
</dbReference>
<dbReference type="GO" id="GO:0009314">
    <property type="term" value="P:response to radiation"/>
    <property type="evidence" value="ECO:0000250"/>
    <property type="project" value="UniProtKB"/>
</dbReference>
<dbReference type="GO" id="GO:0007062">
    <property type="term" value="P:sister chromatid cohesion"/>
    <property type="evidence" value="ECO:0000266"/>
    <property type="project" value="RGD"/>
</dbReference>
<dbReference type="GO" id="GO:0035019">
    <property type="term" value="P:somatic stem cell population maintenance"/>
    <property type="evidence" value="ECO:0000266"/>
    <property type="project" value="RGD"/>
</dbReference>
<dbReference type="CDD" id="cd03275">
    <property type="entry name" value="ABC_SMC1_euk"/>
    <property type="match status" value="2"/>
</dbReference>
<dbReference type="FunFam" id="1.20.1060.20:FF:000001">
    <property type="entry name" value="Structural maintenance of chromosomes 1A"/>
    <property type="match status" value="1"/>
</dbReference>
<dbReference type="FunFam" id="3.40.50.300:FF:000564">
    <property type="entry name" value="Structural maintenance of chromosomes 1A"/>
    <property type="match status" value="1"/>
</dbReference>
<dbReference type="FunFam" id="3.30.70.1620:FF:000001">
    <property type="entry name" value="Structural maintenance of chromosomes 1B"/>
    <property type="match status" value="1"/>
</dbReference>
<dbReference type="FunFam" id="3.40.50.300:FF:000562">
    <property type="entry name" value="Structural maintenance of chromosomes protein"/>
    <property type="match status" value="1"/>
</dbReference>
<dbReference type="Gene3D" id="1.20.1060.20">
    <property type="match status" value="1"/>
</dbReference>
<dbReference type="Gene3D" id="3.30.70.1620">
    <property type="match status" value="1"/>
</dbReference>
<dbReference type="Gene3D" id="3.40.50.300">
    <property type="entry name" value="P-loop containing nucleotide triphosphate hydrolases"/>
    <property type="match status" value="2"/>
</dbReference>
<dbReference type="InterPro" id="IPR027417">
    <property type="entry name" value="P-loop_NTPase"/>
</dbReference>
<dbReference type="InterPro" id="IPR003395">
    <property type="entry name" value="RecF/RecN/SMC_N"/>
</dbReference>
<dbReference type="InterPro" id="IPR024704">
    <property type="entry name" value="SMC"/>
</dbReference>
<dbReference type="InterPro" id="IPR028468">
    <property type="entry name" value="Smc1_ABC"/>
</dbReference>
<dbReference type="InterPro" id="IPR010935">
    <property type="entry name" value="SMC_hinge"/>
</dbReference>
<dbReference type="InterPro" id="IPR036277">
    <property type="entry name" value="SMC_hinge_sf"/>
</dbReference>
<dbReference type="PANTHER" id="PTHR18937:SF170">
    <property type="entry name" value="STRUCTURAL MAINTENANCE OF CHROMOSOMES PROTEIN 1A"/>
    <property type="match status" value="1"/>
</dbReference>
<dbReference type="PANTHER" id="PTHR18937">
    <property type="entry name" value="STRUCTURAL MAINTENANCE OF CHROMOSOMES SMC FAMILY MEMBER"/>
    <property type="match status" value="1"/>
</dbReference>
<dbReference type="Pfam" id="PF06470">
    <property type="entry name" value="SMC_hinge"/>
    <property type="match status" value="1"/>
</dbReference>
<dbReference type="Pfam" id="PF02463">
    <property type="entry name" value="SMC_N"/>
    <property type="match status" value="1"/>
</dbReference>
<dbReference type="PIRSF" id="PIRSF005719">
    <property type="entry name" value="SMC"/>
    <property type="match status" value="1"/>
</dbReference>
<dbReference type="SMART" id="SM00968">
    <property type="entry name" value="SMC_hinge"/>
    <property type="match status" value="1"/>
</dbReference>
<dbReference type="SUPFAM" id="SSF52540">
    <property type="entry name" value="P-loop containing nucleoside triphosphate hydrolases"/>
    <property type="match status" value="1"/>
</dbReference>
<dbReference type="SUPFAM" id="SSF75553">
    <property type="entry name" value="Smc hinge domain"/>
    <property type="match status" value="1"/>
</dbReference>
<accession>Q9Z1M9</accession>
<name>SMC1A_RAT</name>
<evidence type="ECO:0000250" key="1"/>
<evidence type="ECO:0000250" key="2">
    <source>
        <dbReference type="UniProtKB" id="O97593"/>
    </source>
</evidence>
<evidence type="ECO:0000250" key="3">
    <source>
        <dbReference type="UniProtKB" id="Q14683"/>
    </source>
</evidence>
<evidence type="ECO:0000250" key="4">
    <source>
        <dbReference type="UniProtKB" id="Q9CU62"/>
    </source>
</evidence>
<evidence type="ECO:0000255" key="5"/>
<evidence type="ECO:0000256" key="6">
    <source>
        <dbReference type="SAM" id="MobiDB-lite"/>
    </source>
</evidence>
<evidence type="ECO:0000269" key="7">
    <source>
    </source>
</evidence>
<evidence type="ECO:0000305" key="8"/>
<evidence type="ECO:0007744" key="9">
    <source>
    </source>
</evidence>
<proteinExistence type="evidence at protein level"/>
<reference key="1">
    <citation type="submission" date="1998-04" db="EMBL/GenBank/DDBJ databases">
        <title>Molecular characterization of a rat heterochromatin-associated SMC-protein.</title>
        <authorList>
            <person name="Althoff B."/>
            <person name="Voelkl A."/>
            <person name="Fahimi D."/>
            <person name="Baumgart E."/>
        </authorList>
    </citation>
    <scope>NUCLEOTIDE SEQUENCE [MRNA]</scope>
</reference>
<reference key="2">
    <citation type="journal article" date="2000" name="J. Cell Sci.">
        <title>Association of mammalian SMC1 and SMC3 proteins with meiotic chromosomes and synaptonemal complexes.</title>
        <authorList>
            <person name="Eijpe M."/>
            <person name="Heyting C."/>
            <person name="Gross B."/>
            <person name="Jessberger R."/>
        </authorList>
    </citation>
    <scope>INTERACTION WITH SYCP2</scope>
</reference>
<reference key="3">
    <citation type="journal article" date="2012" name="Nat. Commun.">
        <title>Quantitative maps of protein phosphorylation sites across 14 different rat organs and tissues.</title>
        <authorList>
            <person name="Lundby A."/>
            <person name="Secher A."/>
            <person name="Lage K."/>
            <person name="Nordsborg N.B."/>
            <person name="Dmytriyev A."/>
            <person name="Lundby C."/>
            <person name="Olsen J.V."/>
        </authorList>
    </citation>
    <scope>PHOSPHORYLATION [LARGE SCALE ANALYSIS] AT SER-957</scope>
    <scope>IDENTIFICATION BY MASS SPECTROMETRY [LARGE SCALE ANALYSIS]</scope>
</reference>
<keyword id="KW-0007">Acetylation</keyword>
<keyword id="KW-0067">ATP-binding</keyword>
<keyword id="KW-0131">Cell cycle</keyword>
<keyword id="KW-0132">Cell division</keyword>
<keyword id="KW-0158">Chromosome</keyword>
<keyword id="KW-0175">Coiled coil</keyword>
<keyword id="KW-0227">DNA damage</keyword>
<keyword id="KW-0234">DNA repair</keyword>
<keyword id="KW-0469">Meiosis</keyword>
<keyword id="KW-0498">Mitosis</keyword>
<keyword id="KW-0547">Nucleotide-binding</keyword>
<keyword id="KW-0539">Nucleus</keyword>
<keyword id="KW-0597">Phosphoprotein</keyword>
<keyword id="KW-1185">Reference proteome</keyword>
<keyword id="KW-0832">Ubl conjugation</keyword>
<protein>
    <recommendedName>
        <fullName>Structural maintenance of chromosomes protein 1A</fullName>
        <shortName>SMC protein 1A</shortName>
        <shortName>SMC-1A</shortName>
    </recommendedName>
</protein>
<sequence length="1233" mass="143205">MGFLKLIEIENFKSYKGRQIIGPFQRFTAIIGPNGSGKSNLMDAISFVLGEKTSNLRVKTLRDLIHGAPVGKPAANRAFVSMVYSEEGAEDRTFARVIVGGSSEYKINNKVVQLHEYSEELEKLGILIKARNFLVFQGAVESIAMKNPKERTALFEEISRSGELAQEYDKRKKEMVKAEEDTQFNYHRKKNIAAERKEAKQEKEEADRYQALKDEVVRAQVQLQLFKLYHNEVEIEKLNKELASKNKEIEKDKKRMDKVEDELKEKKKELGKMMREQQQIEKEIKEKDSELNQKRPQYIKAKENTSHKIKKLEAAKKSLQNRQKHYKKRKGDMDELEKEMLSVEKARQEFEERMEEESQSQGRDLTLEENQVKKYHRLKEEASKRAATLAQELEKFNRDQKADQDRLDLEERKKVETEAKIKQKLREIEENQKRIEKLEEYITTSKQSLEEQKKLEGELTEEVEMAKRRIDEINKELNQVMEQLGDARIDRQESSRQQRKAEIMESIKRLYPGSVYGRLIDLCQPTQKKYQIAVTKVLGKNMDAIIVDSEKTGRDCIQYIKEQRGEPETFLPLDYLEVKPTDEKLRELKGAKLVIDVIRYEPPHIKKALQYACGNALVCDNVEDARRIAFGGHQRHKTVALDGTLFQKSGVISGGASDLKAKARRWDEKAVDKLKEKKERLTEELKEQMKAKRKEAELRQVQSQAHGLQMRLKYSQSDLEQTKTRHLALNLQEKSKLESELANFGPRINDIKRIIQSREREMKDLKEKMNQVEDEVFEEFCREIGVRNIREFEEEKVKRQNEIAKKRLEFENQKTRLGIQLDFEKNQLKEDQDKVHMWEQTVKKDENEIEKLKKEEQRHMKIIDETMAQLQDLKNQHLAKKSEVNDKNHEMEEIRKKLGGANKEMTHLQKEVTAIETKLEQKRSDRHNLLQACKMQDIKLPLSKGTMDDISQEEGGSQGEESVSGSQRTSSIYAREALIEIDYGDLCEDLKDAQAEEEIKQEMNTLQQKLNEQQSVLQRIAAPNMKAMEKLESVRDKFQETSDEFEAARKRAKKAKQAFEQIKKERFDRFNACFESVATNIDEIYKALSRNSSAQAFLGPENPEEPYLDGINYNCVAPGKRFRPMDNLSGGEKTVAALALLFAIHSYKPAPFFVLDEIDAALDNTNIGKVANYIKEQSTCNFQAIVISLKEEFYTKAESLIGVYPEQGDCVISKVLTFDLTKYPDANPNPNEQ</sequence>
<gene>
    <name type="primary">Smc1a</name>
    <name type="synonym">Smc1</name>
    <name type="synonym">Smc1l1</name>
</gene>
<organism>
    <name type="scientific">Rattus norvegicus</name>
    <name type="common">Rat</name>
    <dbReference type="NCBI Taxonomy" id="10116"/>
    <lineage>
        <taxon>Eukaryota</taxon>
        <taxon>Metazoa</taxon>
        <taxon>Chordata</taxon>
        <taxon>Craniata</taxon>
        <taxon>Vertebrata</taxon>
        <taxon>Euteleostomi</taxon>
        <taxon>Mammalia</taxon>
        <taxon>Eutheria</taxon>
        <taxon>Euarchontoglires</taxon>
        <taxon>Glires</taxon>
        <taxon>Rodentia</taxon>
        <taxon>Myomorpha</taxon>
        <taxon>Muroidea</taxon>
        <taxon>Muridae</taxon>
        <taxon>Murinae</taxon>
        <taxon>Rattus</taxon>
    </lineage>
</organism>
<feature type="chain" id="PRO_0000118991" description="Structural maintenance of chromosomes protein 1A">
    <location>
        <begin position="1"/>
        <end position="1233"/>
    </location>
</feature>
<feature type="domain" description="SMC hinge">
    <location>
        <begin position="515"/>
        <end position="629"/>
    </location>
</feature>
<feature type="region of interest" description="Disordered" evidence="6">
    <location>
        <begin position="284"/>
        <end position="307"/>
    </location>
</feature>
<feature type="region of interest" description="Disordered" evidence="6">
    <location>
        <begin position="350"/>
        <end position="369"/>
    </location>
</feature>
<feature type="region of interest" description="Disordered" evidence="6">
    <location>
        <begin position="946"/>
        <end position="969"/>
    </location>
</feature>
<feature type="coiled-coil region" evidence="5">
    <location>
        <begin position="104"/>
        <end position="124"/>
    </location>
</feature>
<feature type="coiled-coil region" evidence="5">
    <location>
        <begin position="163"/>
        <end position="503"/>
    </location>
</feature>
<feature type="coiled-coil region" evidence="5">
    <location>
        <begin position="660"/>
        <end position="935"/>
    </location>
</feature>
<feature type="coiled-coil region" evidence="5">
    <location>
        <begin position="991"/>
        <end position="1068"/>
    </location>
</feature>
<feature type="compositionally biased region" description="Basic and acidic residues" evidence="6">
    <location>
        <begin position="284"/>
        <end position="293"/>
    </location>
</feature>
<feature type="compositionally biased region" description="Low complexity" evidence="6">
    <location>
        <begin position="953"/>
        <end position="967"/>
    </location>
</feature>
<feature type="binding site" evidence="5">
    <location>
        <begin position="32"/>
        <end position="39"/>
    </location>
    <ligand>
        <name>ATP</name>
        <dbReference type="ChEBI" id="CHEBI:30616"/>
    </ligand>
</feature>
<feature type="modified residue" description="Phosphoserine" evidence="3">
    <location>
        <position position="358"/>
    </location>
</feature>
<feature type="modified residue" description="Phosphoserine" evidence="3">
    <location>
        <position position="360"/>
    </location>
</feature>
<feature type="modified residue" description="N6-acetyllysine" evidence="3">
    <location>
        <position position="648"/>
    </location>
</feature>
<feature type="modified residue" description="N6-acetyllysine" evidence="3">
    <location>
        <position position="713"/>
    </location>
</feature>
<feature type="modified residue" description="Phosphoserine" evidence="9">
    <location>
        <position position="957"/>
    </location>
</feature>
<feature type="modified residue" description="Phosphoserine" evidence="3">
    <location>
        <position position="962"/>
    </location>
</feature>
<feature type="modified residue" description="Phosphoserine" evidence="3">
    <location>
        <position position="966"/>
    </location>
</feature>
<feature type="modified residue" description="Phosphoserine" evidence="3">
    <location>
        <position position="970"/>
    </location>
</feature>
<feature type="modified residue" description="N6-acetyllysine" evidence="4">
    <location>
        <position position="1037"/>
    </location>
</feature>